<sequence length="451" mass="47324">MNTNKILETIKMIEEEKLDIRTITMGISLLDCIDPDGEKARIKIYDKITKSAEHLVEVGRQIESEFGIPIVNKRVSVTPISIIAGATNEESYVKFAQTLDKAADTLGIDFLGGFSALVQKGCTKGDKILINSIPEALAITQKVCASVNVGCTKSGINMNAVRDMGEIIKKTAELTKDKKGFGCAKLVVFANAVEDNPFMAGAFHGVGEAEKIINVGVSGPGVVKRALEKVRGQSFDVVAETIKKTAFKVTRMGELVANEASRRLGVPFGIVDLSLAPTPAVGDSVAEILEEIGLETVGTHGTIAALAMLNDAVKKGGVMACSHVGGLSGAFIPVSEDAGMIEAVIKGSLNLEKLEGMTCVCSVGLDMIAIPGNTPASTISAMIADEAAIGVINNKTTAVRIIPAPGCSVGDMVEFGGLLGRAPVMKVNENSSELFAQRGGRIPAPIHSFKN</sequence>
<comment type="subunit">
    <text evidence="1">Homodimer.</text>
</comment>
<comment type="similarity">
    <text evidence="1">Belongs to the UPF0210 family.</text>
</comment>
<accession>B2TL32</accession>
<proteinExistence type="inferred from homology"/>
<feature type="chain" id="PRO_1000139225" description="UPF0210 protein CLL_A1718">
    <location>
        <begin position="1"/>
        <end position="451"/>
    </location>
</feature>
<name>Y1718_CLOBB</name>
<evidence type="ECO:0000255" key="1">
    <source>
        <dbReference type="HAMAP-Rule" id="MF_01221"/>
    </source>
</evidence>
<reference key="1">
    <citation type="submission" date="2008-04" db="EMBL/GenBank/DDBJ databases">
        <title>Complete sequence of Clostridium botulinum strain Eklund.</title>
        <authorList>
            <person name="Brinkac L.M."/>
            <person name="Brown J.L."/>
            <person name="Bruce D."/>
            <person name="Detter C."/>
            <person name="Munk C."/>
            <person name="Smith L.A."/>
            <person name="Smith T.J."/>
            <person name="Sutton G."/>
            <person name="Brettin T.S."/>
        </authorList>
    </citation>
    <scope>NUCLEOTIDE SEQUENCE [LARGE SCALE GENOMIC DNA]</scope>
    <source>
        <strain>Eklund 17B / Type B</strain>
    </source>
</reference>
<protein>
    <recommendedName>
        <fullName evidence="1">UPF0210 protein CLL_A1718</fullName>
    </recommendedName>
</protein>
<organism>
    <name type="scientific">Clostridium botulinum (strain Eklund 17B / Type B)</name>
    <dbReference type="NCBI Taxonomy" id="935198"/>
    <lineage>
        <taxon>Bacteria</taxon>
        <taxon>Bacillati</taxon>
        <taxon>Bacillota</taxon>
        <taxon>Clostridia</taxon>
        <taxon>Eubacteriales</taxon>
        <taxon>Clostridiaceae</taxon>
        <taxon>Clostridium</taxon>
    </lineage>
</organism>
<dbReference type="EMBL" id="CP001056">
    <property type="protein sequence ID" value="ACD23911.1"/>
    <property type="molecule type" value="Genomic_DNA"/>
</dbReference>
<dbReference type="SMR" id="B2TL32"/>
<dbReference type="KEGG" id="cbk:CLL_A1718"/>
<dbReference type="HOGENOM" id="CLU_048704_0_0_9"/>
<dbReference type="Proteomes" id="UP000001195">
    <property type="component" value="Chromosome"/>
</dbReference>
<dbReference type="CDD" id="cd08025">
    <property type="entry name" value="RNR_PFL_like_DUF711"/>
    <property type="match status" value="1"/>
</dbReference>
<dbReference type="Gene3D" id="3.20.70.20">
    <property type="match status" value="1"/>
</dbReference>
<dbReference type="HAMAP" id="MF_01221">
    <property type="entry name" value="UPF0210"/>
    <property type="match status" value="1"/>
</dbReference>
<dbReference type="InterPro" id="IPR007841">
    <property type="entry name" value="UPF0210"/>
</dbReference>
<dbReference type="NCBIfam" id="NF003700">
    <property type="entry name" value="PRK05313.1"/>
    <property type="match status" value="1"/>
</dbReference>
<dbReference type="PANTHER" id="PTHR37560:SF1">
    <property type="entry name" value="UPF0210 PROTEIN MJ1665"/>
    <property type="match status" value="1"/>
</dbReference>
<dbReference type="PANTHER" id="PTHR37560">
    <property type="entry name" value="UPF0210 PROTEIN SPR0218"/>
    <property type="match status" value="1"/>
</dbReference>
<dbReference type="Pfam" id="PF05167">
    <property type="entry name" value="DUF711"/>
    <property type="match status" value="1"/>
</dbReference>
<dbReference type="SUPFAM" id="SSF51998">
    <property type="entry name" value="PFL-like glycyl radical enzymes"/>
    <property type="match status" value="1"/>
</dbReference>
<gene>
    <name type="ordered locus">CLL_A1718</name>
</gene>